<gene>
    <name type="ORF">T05G5.5</name>
</gene>
<proteinExistence type="inferred from homology"/>
<keyword id="KW-0067">ATP-binding</keyword>
<keyword id="KW-0547">Nucleotide-binding</keyword>
<keyword id="KW-1185">Reference proteome</keyword>
<feature type="chain" id="PRO_0000173044" description="Uncharacterized protein T05G5.5">
    <location>
        <begin position="1"/>
        <end position="237"/>
    </location>
</feature>
<feature type="domain" description="DPCK">
    <location>
        <begin position="13"/>
        <end position="218"/>
    </location>
</feature>
<feature type="binding site" evidence="1">
    <location>
        <begin position="18"/>
        <end position="25"/>
    </location>
    <ligand>
        <name>ATP</name>
        <dbReference type="ChEBI" id="CHEBI:30616"/>
    </ligand>
</feature>
<reference key="1">
    <citation type="journal article" date="1994" name="Nature">
        <title>2.2 Mb of contiguous nucleotide sequence from chromosome III of C. elegans.</title>
        <authorList>
            <person name="Wilson R."/>
            <person name="Ainscough R."/>
            <person name="Anderson K."/>
            <person name="Baynes C."/>
            <person name="Berks M."/>
            <person name="Bonfield J."/>
            <person name="Burton J."/>
            <person name="Connell M."/>
            <person name="Copsey T."/>
            <person name="Cooper J."/>
            <person name="Coulson A."/>
            <person name="Craxton M."/>
            <person name="Dear S."/>
            <person name="Du Z."/>
            <person name="Durbin R."/>
            <person name="Favello A."/>
            <person name="Fraser A."/>
            <person name="Fulton L."/>
            <person name="Gardner A."/>
            <person name="Green P."/>
            <person name="Hawkins T."/>
            <person name="Hillier L."/>
            <person name="Jier M."/>
            <person name="Johnston L."/>
            <person name="Jones M."/>
            <person name="Kershaw J."/>
            <person name="Kirsten J."/>
            <person name="Laisster N."/>
            <person name="Latreille P."/>
            <person name="Lightning J."/>
            <person name="Lloyd C."/>
            <person name="Mortimore B."/>
            <person name="O'Callaghan M."/>
            <person name="Parsons J."/>
            <person name="Percy C."/>
            <person name="Rifken L."/>
            <person name="Roopra A."/>
            <person name="Saunders D."/>
            <person name="Shownkeen R."/>
            <person name="Sims M."/>
            <person name="Smaldon N."/>
            <person name="Smith A."/>
            <person name="Smith M."/>
            <person name="Sonnhammer E."/>
            <person name="Staden R."/>
            <person name="Sulston J."/>
            <person name="Thierry-Mieg J."/>
            <person name="Thomas K."/>
            <person name="Vaudin M."/>
            <person name="Vaughan K."/>
            <person name="Waterston R."/>
            <person name="Watson A."/>
            <person name="Weinstock L."/>
            <person name="Wilkinson-Sproat J."/>
            <person name="Wohldman P."/>
        </authorList>
    </citation>
    <scope>NUCLEOTIDE SEQUENCE [LARGE SCALE GENOMIC DNA]</scope>
    <source>
        <strain>Bristol N2</strain>
    </source>
</reference>
<reference key="2">
    <citation type="journal article" date="1998" name="Science">
        <title>Genome sequence of the nematode C. elegans: a platform for investigating biology.</title>
        <authorList>
            <consortium name="The C. elegans sequencing consortium"/>
        </authorList>
    </citation>
    <scope>NUCLEOTIDE SEQUENCE [LARGE SCALE GENOMIC DNA]</scope>
    <source>
        <strain>Bristol N2</strain>
    </source>
</reference>
<evidence type="ECO:0000255" key="1"/>
<evidence type="ECO:0000305" key="2"/>
<name>YNP5_CAEEL</name>
<comment type="similarity">
    <text evidence="2">Belongs to the CoaE family.</text>
</comment>
<organism>
    <name type="scientific">Caenorhabditis elegans</name>
    <dbReference type="NCBI Taxonomy" id="6239"/>
    <lineage>
        <taxon>Eukaryota</taxon>
        <taxon>Metazoa</taxon>
        <taxon>Ecdysozoa</taxon>
        <taxon>Nematoda</taxon>
        <taxon>Chromadorea</taxon>
        <taxon>Rhabditida</taxon>
        <taxon>Rhabditina</taxon>
        <taxon>Rhabditomorpha</taxon>
        <taxon>Rhabditoidea</taxon>
        <taxon>Rhabditidae</taxon>
        <taxon>Peloderinae</taxon>
        <taxon>Caenorhabditis</taxon>
    </lineage>
</organism>
<dbReference type="EMBL" id="Z27079">
    <property type="protein sequence ID" value="CAA81598.2"/>
    <property type="molecule type" value="Genomic_DNA"/>
</dbReference>
<dbReference type="PIR" id="B88564">
    <property type="entry name" value="B88564"/>
</dbReference>
<dbReference type="RefSeq" id="NP_001255023.1">
    <property type="nucleotide sequence ID" value="NM_001268094.4"/>
</dbReference>
<dbReference type="SMR" id="P34558"/>
<dbReference type="FunCoup" id="P34558">
    <property type="interactions" value="2074"/>
</dbReference>
<dbReference type="STRING" id="6239.T05G5.5d.1"/>
<dbReference type="PaxDb" id="6239-T05G5.5d"/>
<dbReference type="EnsemblMetazoa" id="T05G5.5a.1">
    <property type="protein sequence ID" value="T05G5.5a.1"/>
    <property type="gene ID" value="WBGene00011500"/>
</dbReference>
<dbReference type="GeneID" id="176375"/>
<dbReference type="KEGG" id="cel:CELE_T05G5.5"/>
<dbReference type="UCSC" id="T05G5.5">
    <property type="organism name" value="c. elegans"/>
</dbReference>
<dbReference type="AGR" id="WB:WBGene00011500"/>
<dbReference type="CTD" id="176375"/>
<dbReference type="WormBase" id="T05G5.5a">
    <property type="protein sequence ID" value="CE23950"/>
    <property type="gene ID" value="WBGene00011500"/>
</dbReference>
<dbReference type="eggNOG" id="KOG3220">
    <property type="taxonomic scope" value="Eukaryota"/>
</dbReference>
<dbReference type="GeneTree" id="ENSGT00550000075038"/>
<dbReference type="InParanoid" id="P34558"/>
<dbReference type="OrthoDB" id="247245at2759"/>
<dbReference type="PhylomeDB" id="P34558"/>
<dbReference type="Reactome" id="R-CEL-196783">
    <property type="pathway name" value="Coenzyme A biosynthesis"/>
</dbReference>
<dbReference type="PRO" id="PR:P34558"/>
<dbReference type="Proteomes" id="UP000001940">
    <property type="component" value="Chromosome III"/>
</dbReference>
<dbReference type="Bgee" id="WBGene00011500">
    <property type="expression patterns" value="Expressed in embryo and 4 other cell types or tissues"/>
</dbReference>
<dbReference type="ExpressionAtlas" id="P34558">
    <property type="expression patterns" value="baseline and differential"/>
</dbReference>
<dbReference type="GO" id="GO:0005739">
    <property type="term" value="C:mitochondrion"/>
    <property type="evidence" value="ECO:0007005"/>
    <property type="project" value="WormBase"/>
</dbReference>
<dbReference type="GO" id="GO:0005524">
    <property type="term" value="F:ATP binding"/>
    <property type="evidence" value="ECO:0007669"/>
    <property type="project" value="UniProtKB-KW"/>
</dbReference>
<dbReference type="GO" id="GO:0004140">
    <property type="term" value="F:dephospho-CoA kinase activity"/>
    <property type="evidence" value="ECO:0000318"/>
    <property type="project" value="GO_Central"/>
</dbReference>
<dbReference type="GO" id="GO:0015937">
    <property type="term" value="P:coenzyme A biosynthetic process"/>
    <property type="evidence" value="ECO:0000318"/>
    <property type="project" value="GO_Central"/>
</dbReference>
<dbReference type="CDD" id="cd02022">
    <property type="entry name" value="DPCK"/>
    <property type="match status" value="1"/>
</dbReference>
<dbReference type="FunFam" id="3.40.50.300:FF:002606">
    <property type="entry name" value="Dephospho-CoA kinase 2"/>
    <property type="match status" value="1"/>
</dbReference>
<dbReference type="Gene3D" id="3.40.50.300">
    <property type="entry name" value="P-loop containing nucleotide triphosphate hydrolases"/>
    <property type="match status" value="1"/>
</dbReference>
<dbReference type="HAMAP" id="MF_00376">
    <property type="entry name" value="Dephospho_CoA_kinase"/>
    <property type="match status" value="1"/>
</dbReference>
<dbReference type="InterPro" id="IPR001977">
    <property type="entry name" value="Depp_CoAkinase"/>
</dbReference>
<dbReference type="InterPro" id="IPR027417">
    <property type="entry name" value="P-loop_NTPase"/>
</dbReference>
<dbReference type="NCBIfam" id="TIGR00152">
    <property type="entry name" value="dephospho-CoA kinase"/>
    <property type="match status" value="1"/>
</dbReference>
<dbReference type="PANTHER" id="PTHR10695:SF46">
    <property type="entry name" value="BIFUNCTIONAL COENZYME A SYNTHASE-RELATED"/>
    <property type="match status" value="1"/>
</dbReference>
<dbReference type="PANTHER" id="PTHR10695">
    <property type="entry name" value="DEPHOSPHO-COA KINASE-RELATED"/>
    <property type="match status" value="1"/>
</dbReference>
<dbReference type="Pfam" id="PF01121">
    <property type="entry name" value="CoaE"/>
    <property type="match status" value="1"/>
</dbReference>
<dbReference type="SUPFAM" id="SSF52540">
    <property type="entry name" value="P-loop containing nucleoside triphosphate hydrolases"/>
    <property type="match status" value="1"/>
</dbReference>
<dbReference type="PROSITE" id="PS51219">
    <property type="entry name" value="DPCK"/>
    <property type="match status" value="1"/>
</dbReference>
<protein>
    <recommendedName>
        <fullName>Uncharacterized protein T05G5.5</fullName>
    </recommendedName>
</protein>
<accession>P34558</accession>
<sequence>MWLDWFFPIEMLVVGLSGGVATGKSTVSSVFRAHGVPIIDADQVARQVVVPGTSTYNRLRKEFGDEYFDDEHGGVLRRDKLGKLIFSNPEKRKALNGITHPAIRWEMFKQFLTLLITGTKYIVFDTPLLFESGYDKWIGTTIVVWCDFEQEVERMVTRDNISRADAESRIHAQMDIEEKKKRAKIVIDNNGNIDELREKVKHVIAQLDKSWKPYIFRVAFGIILGVVPYYFFKYIRS</sequence>